<accession>A7ZFS7</accession>
<sequence>MGLKSDSWIRKMSVEKKMIVPFAEEQVGRGVVSYGVSSYGYDIRVGDEFKIFTNIGGTVVDPKNFDEKNVVDFKGDVCIVPPNSFALARTIEYFNMPDNVLAICLGKSTYARCGIIVNVTPFEPGFKGHITIEISNTTPLPAKIYANEGIAQVLFIEGDEPCEVTYADKNGKYQAQEGITLPRILK</sequence>
<reference key="1">
    <citation type="submission" date="2007-10" db="EMBL/GenBank/DDBJ databases">
        <title>Genome sequence of Campylobacter concisus 13826 isolated from human feces.</title>
        <authorList>
            <person name="Fouts D.E."/>
            <person name="Mongodin E.F."/>
            <person name="Puiu D."/>
            <person name="Sebastian Y."/>
            <person name="Miller W.G."/>
            <person name="Mandrell R.E."/>
            <person name="On S."/>
            <person name="Nelson K.E."/>
        </authorList>
    </citation>
    <scope>NUCLEOTIDE SEQUENCE [LARGE SCALE GENOMIC DNA]</scope>
    <source>
        <strain>13826</strain>
    </source>
</reference>
<dbReference type="EC" id="3.5.4.13" evidence="1"/>
<dbReference type="EMBL" id="CP000792">
    <property type="protein sequence ID" value="EAT97959.1"/>
    <property type="molecule type" value="Genomic_DNA"/>
</dbReference>
<dbReference type="RefSeq" id="WP_002939953.1">
    <property type="nucleotide sequence ID" value="NC_009802.2"/>
</dbReference>
<dbReference type="SMR" id="A7ZFS7"/>
<dbReference type="STRING" id="360104.CCC13826_2308"/>
<dbReference type="GeneID" id="28663304"/>
<dbReference type="KEGG" id="cco:CCC13826_2308"/>
<dbReference type="eggNOG" id="COG0717">
    <property type="taxonomic scope" value="Bacteria"/>
</dbReference>
<dbReference type="HOGENOM" id="CLU_087476_4_0_7"/>
<dbReference type="OrthoDB" id="9780956at2"/>
<dbReference type="UniPathway" id="UPA00610">
    <property type="reaction ID" value="UER00665"/>
</dbReference>
<dbReference type="Proteomes" id="UP000001121">
    <property type="component" value="Chromosome"/>
</dbReference>
<dbReference type="GO" id="GO:0008829">
    <property type="term" value="F:dCTP deaminase activity"/>
    <property type="evidence" value="ECO:0007669"/>
    <property type="project" value="UniProtKB-UniRule"/>
</dbReference>
<dbReference type="GO" id="GO:0000166">
    <property type="term" value="F:nucleotide binding"/>
    <property type="evidence" value="ECO:0007669"/>
    <property type="project" value="UniProtKB-KW"/>
</dbReference>
<dbReference type="GO" id="GO:0006226">
    <property type="term" value="P:dUMP biosynthetic process"/>
    <property type="evidence" value="ECO:0007669"/>
    <property type="project" value="UniProtKB-UniPathway"/>
</dbReference>
<dbReference type="GO" id="GO:0006229">
    <property type="term" value="P:dUTP biosynthetic process"/>
    <property type="evidence" value="ECO:0007669"/>
    <property type="project" value="UniProtKB-UniRule"/>
</dbReference>
<dbReference type="GO" id="GO:0015949">
    <property type="term" value="P:nucleobase-containing small molecule interconversion"/>
    <property type="evidence" value="ECO:0007669"/>
    <property type="project" value="TreeGrafter"/>
</dbReference>
<dbReference type="CDD" id="cd07557">
    <property type="entry name" value="trimeric_dUTPase"/>
    <property type="match status" value="1"/>
</dbReference>
<dbReference type="FunFam" id="2.70.40.10:FF:000001">
    <property type="entry name" value="dCTP deaminase"/>
    <property type="match status" value="1"/>
</dbReference>
<dbReference type="Gene3D" id="2.70.40.10">
    <property type="match status" value="1"/>
</dbReference>
<dbReference type="HAMAP" id="MF_00146">
    <property type="entry name" value="dCTP_deaminase"/>
    <property type="match status" value="1"/>
</dbReference>
<dbReference type="InterPro" id="IPR011962">
    <property type="entry name" value="dCTP_deaminase"/>
</dbReference>
<dbReference type="InterPro" id="IPR036157">
    <property type="entry name" value="dUTPase-like_sf"/>
</dbReference>
<dbReference type="InterPro" id="IPR033704">
    <property type="entry name" value="dUTPase_trimeric"/>
</dbReference>
<dbReference type="NCBIfam" id="TIGR02274">
    <property type="entry name" value="dCTP_deam"/>
    <property type="match status" value="1"/>
</dbReference>
<dbReference type="PANTHER" id="PTHR42680">
    <property type="entry name" value="DCTP DEAMINASE"/>
    <property type="match status" value="1"/>
</dbReference>
<dbReference type="PANTHER" id="PTHR42680:SF3">
    <property type="entry name" value="DCTP DEAMINASE"/>
    <property type="match status" value="1"/>
</dbReference>
<dbReference type="Pfam" id="PF22769">
    <property type="entry name" value="DCD"/>
    <property type="match status" value="1"/>
</dbReference>
<dbReference type="SUPFAM" id="SSF51283">
    <property type="entry name" value="dUTPase-like"/>
    <property type="match status" value="1"/>
</dbReference>
<organism>
    <name type="scientific">Campylobacter concisus (strain 13826)</name>
    <dbReference type="NCBI Taxonomy" id="360104"/>
    <lineage>
        <taxon>Bacteria</taxon>
        <taxon>Pseudomonadati</taxon>
        <taxon>Campylobacterota</taxon>
        <taxon>Epsilonproteobacteria</taxon>
        <taxon>Campylobacterales</taxon>
        <taxon>Campylobacteraceae</taxon>
        <taxon>Campylobacter</taxon>
    </lineage>
</organism>
<protein>
    <recommendedName>
        <fullName evidence="1">dCTP deaminase</fullName>
        <ecNumber evidence="1">3.5.4.13</ecNumber>
    </recommendedName>
    <alternativeName>
        <fullName evidence="1">Deoxycytidine triphosphate deaminase</fullName>
    </alternativeName>
</protein>
<feature type="chain" id="PRO_1000009698" description="dCTP deaminase">
    <location>
        <begin position="1"/>
        <end position="186"/>
    </location>
</feature>
<feature type="active site" description="Proton donor/acceptor" evidence="1">
    <location>
        <position position="133"/>
    </location>
</feature>
<feature type="binding site" evidence="1">
    <location>
        <begin position="107"/>
        <end position="112"/>
    </location>
    <ligand>
        <name>dCTP</name>
        <dbReference type="ChEBI" id="CHEBI:61481"/>
    </ligand>
</feature>
<feature type="binding site" evidence="1">
    <location>
        <position position="152"/>
    </location>
    <ligand>
        <name>dCTP</name>
        <dbReference type="ChEBI" id="CHEBI:61481"/>
    </ligand>
</feature>
<feature type="binding site" evidence="1">
    <location>
        <position position="166"/>
    </location>
    <ligand>
        <name>dCTP</name>
        <dbReference type="ChEBI" id="CHEBI:61481"/>
    </ligand>
</feature>
<feature type="binding site" evidence="1">
    <location>
        <position position="176"/>
    </location>
    <ligand>
        <name>dCTP</name>
        <dbReference type="ChEBI" id="CHEBI:61481"/>
    </ligand>
</feature>
<keyword id="KW-0378">Hydrolase</keyword>
<keyword id="KW-0546">Nucleotide metabolism</keyword>
<keyword id="KW-0547">Nucleotide-binding</keyword>
<proteinExistence type="inferred from homology"/>
<name>DCD_CAMC1</name>
<comment type="function">
    <text evidence="1">Catalyzes the deamination of dCTP to dUTP.</text>
</comment>
<comment type="catalytic activity">
    <reaction evidence="1">
        <text>dCTP + H2O + H(+) = dUTP + NH4(+)</text>
        <dbReference type="Rhea" id="RHEA:22680"/>
        <dbReference type="ChEBI" id="CHEBI:15377"/>
        <dbReference type="ChEBI" id="CHEBI:15378"/>
        <dbReference type="ChEBI" id="CHEBI:28938"/>
        <dbReference type="ChEBI" id="CHEBI:61481"/>
        <dbReference type="ChEBI" id="CHEBI:61555"/>
        <dbReference type="EC" id="3.5.4.13"/>
    </reaction>
</comment>
<comment type="pathway">
    <text evidence="1">Pyrimidine metabolism; dUMP biosynthesis; dUMP from dCTP (dUTP route): step 1/2.</text>
</comment>
<comment type="subunit">
    <text evidence="1">Homotrimer.</text>
</comment>
<comment type="similarity">
    <text evidence="1">Belongs to the dCTP deaminase family.</text>
</comment>
<evidence type="ECO:0000255" key="1">
    <source>
        <dbReference type="HAMAP-Rule" id="MF_00146"/>
    </source>
</evidence>
<gene>
    <name evidence="1" type="primary">dcd</name>
    <name type="ordered locus">Ccon26_18010</name>
    <name type="ORF">CCC13826_2308</name>
</gene>